<comment type="function">
    <text evidence="1">Required for rescue of stalled ribosomes mediated by trans-translation. Binds to transfer-messenger RNA (tmRNA), required for stable association of tmRNA with ribosomes. tmRNA and SmpB together mimic tRNA shape, replacing the anticodon stem-loop with SmpB. tmRNA is encoded by the ssrA gene; the 2 termini fold to resemble tRNA(Ala) and it encodes a 'tag peptide', a short internal open reading frame. During trans-translation Ala-aminoacylated tmRNA acts like a tRNA, entering the A-site of stalled ribosomes, displacing the stalled mRNA. The ribosome then switches to translate the ORF on the tmRNA; the nascent peptide is terminated with the 'tag peptide' encoded by the tmRNA and targeted for degradation. The ribosome is freed to recommence translation, which seems to be the essential function of trans-translation.</text>
</comment>
<comment type="subcellular location">
    <subcellularLocation>
        <location evidence="1">Cytoplasm</location>
    </subcellularLocation>
    <text evidence="1">The tmRNA-SmpB complex associates with stalled 70S ribosomes.</text>
</comment>
<comment type="similarity">
    <text evidence="1">Belongs to the SmpB family.</text>
</comment>
<sequence>MIIANNKKAFFDYFIEEKYEAGIELKGSEVKSIKAGKVSIKEAFVRIINDEIFIMGMSVVPWEFGSVYNPEERRVRKLLLHRKEIKKIHEKVKIKGYTIVPLDVHLSKGYVKMQIAIAKGKKTYDKRESIAKKDQERNLKREFKNNNR</sequence>
<reference key="1">
    <citation type="journal article" date="2002" name="J. Bacteriol.">
        <title>Genome sequence and analysis of the oral bacterium Fusobacterium nucleatum strain ATCC 25586.</title>
        <authorList>
            <person name="Kapatral V."/>
            <person name="Anderson I."/>
            <person name="Ivanova N."/>
            <person name="Reznik G."/>
            <person name="Los T."/>
            <person name="Lykidis A."/>
            <person name="Bhattacharyya A."/>
            <person name="Bartman A."/>
            <person name="Gardner W."/>
            <person name="Grechkin G."/>
            <person name="Zhu L."/>
            <person name="Vasieva O."/>
            <person name="Chu L."/>
            <person name="Kogan Y."/>
            <person name="Chaga O."/>
            <person name="Goltsman E."/>
            <person name="Bernal A."/>
            <person name="Larsen N."/>
            <person name="D'Souza M."/>
            <person name="Walunas T."/>
            <person name="Pusch G."/>
            <person name="Haselkorn R."/>
            <person name="Fonstein M."/>
            <person name="Kyrpides N.C."/>
            <person name="Overbeek R."/>
        </authorList>
    </citation>
    <scope>NUCLEOTIDE SEQUENCE [LARGE SCALE GENOMIC DNA]</scope>
    <source>
        <strain>ATCC 25586 / DSM 15643 / BCRC 10681 / CIP 101130 / JCM 8532 / KCTC 2640 / LMG 13131 / VPI 4355</strain>
    </source>
</reference>
<accession>Q8RFS8</accession>
<gene>
    <name evidence="1" type="primary">smpB</name>
    <name type="ordered locus">FN0609</name>
</gene>
<keyword id="KW-0963">Cytoplasm</keyword>
<keyword id="KW-1185">Reference proteome</keyword>
<keyword id="KW-0694">RNA-binding</keyword>
<organism>
    <name type="scientific">Fusobacterium nucleatum subsp. nucleatum (strain ATCC 25586 / DSM 15643 / BCRC 10681 / CIP 101130 / JCM 8532 / KCTC 2640 / LMG 13131 / VPI 4355)</name>
    <dbReference type="NCBI Taxonomy" id="190304"/>
    <lineage>
        <taxon>Bacteria</taxon>
        <taxon>Fusobacteriati</taxon>
        <taxon>Fusobacteriota</taxon>
        <taxon>Fusobacteriia</taxon>
        <taxon>Fusobacteriales</taxon>
        <taxon>Fusobacteriaceae</taxon>
        <taxon>Fusobacterium</taxon>
    </lineage>
</organism>
<feature type="chain" id="PRO_0000102951" description="SsrA-binding protein">
    <location>
        <begin position="1"/>
        <end position="148"/>
    </location>
</feature>
<feature type="region of interest" description="Disordered" evidence="2">
    <location>
        <begin position="128"/>
        <end position="148"/>
    </location>
</feature>
<dbReference type="EMBL" id="AE009951">
    <property type="protein sequence ID" value="AAL94805.1"/>
    <property type="molecule type" value="Genomic_DNA"/>
</dbReference>
<dbReference type="RefSeq" id="NP_603506.1">
    <property type="nucleotide sequence ID" value="NC_003454.1"/>
</dbReference>
<dbReference type="RefSeq" id="WP_011016522.1">
    <property type="nucleotide sequence ID" value="NZ_CP028101.1"/>
</dbReference>
<dbReference type="SMR" id="Q8RFS8"/>
<dbReference type="FunCoup" id="Q8RFS8">
    <property type="interactions" value="269"/>
</dbReference>
<dbReference type="STRING" id="190304.FN0609"/>
<dbReference type="PaxDb" id="190304-FN0609"/>
<dbReference type="EnsemblBacteria" id="AAL94805">
    <property type="protein sequence ID" value="AAL94805"/>
    <property type="gene ID" value="FN0609"/>
</dbReference>
<dbReference type="GeneID" id="79783608"/>
<dbReference type="KEGG" id="fnu:FN0609"/>
<dbReference type="PATRIC" id="fig|190304.8.peg.1174"/>
<dbReference type="eggNOG" id="COG0691">
    <property type="taxonomic scope" value="Bacteria"/>
</dbReference>
<dbReference type="HOGENOM" id="CLU_108953_0_1_0"/>
<dbReference type="InParanoid" id="Q8RFS8"/>
<dbReference type="BioCyc" id="FNUC190304:G1FZS-1196-MONOMER"/>
<dbReference type="Proteomes" id="UP000002521">
    <property type="component" value="Chromosome"/>
</dbReference>
<dbReference type="GO" id="GO:0005829">
    <property type="term" value="C:cytosol"/>
    <property type="evidence" value="ECO:0000318"/>
    <property type="project" value="GO_Central"/>
</dbReference>
<dbReference type="GO" id="GO:0003723">
    <property type="term" value="F:RNA binding"/>
    <property type="evidence" value="ECO:0000318"/>
    <property type="project" value="GO_Central"/>
</dbReference>
<dbReference type="GO" id="GO:0070929">
    <property type="term" value="P:trans-translation"/>
    <property type="evidence" value="ECO:0007669"/>
    <property type="project" value="UniProtKB-UniRule"/>
</dbReference>
<dbReference type="CDD" id="cd09294">
    <property type="entry name" value="SmpB"/>
    <property type="match status" value="1"/>
</dbReference>
<dbReference type="Gene3D" id="2.40.280.10">
    <property type="match status" value="1"/>
</dbReference>
<dbReference type="HAMAP" id="MF_00023">
    <property type="entry name" value="SmpB"/>
    <property type="match status" value="1"/>
</dbReference>
<dbReference type="InterPro" id="IPR023620">
    <property type="entry name" value="SmpB"/>
</dbReference>
<dbReference type="InterPro" id="IPR000037">
    <property type="entry name" value="SsrA-bd_prot"/>
</dbReference>
<dbReference type="InterPro" id="IPR020081">
    <property type="entry name" value="SsrA-bd_prot_CS"/>
</dbReference>
<dbReference type="NCBIfam" id="NF003843">
    <property type="entry name" value="PRK05422.1"/>
    <property type="match status" value="1"/>
</dbReference>
<dbReference type="NCBIfam" id="TIGR00086">
    <property type="entry name" value="smpB"/>
    <property type="match status" value="1"/>
</dbReference>
<dbReference type="PANTHER" id="PTHR30308:SF2">
    <property type="entry name" value="SSRA-BINDING PROTEIN"/>
    <property type="match status" value="1"/>
</dbReference>
<dbReference type="PANTHER" id="PTHR30308">
    <property type="entry name" value="TMRNA-BINDING COMPONENT OF TRANS-TRANSLATION TAGGING COMPLEX"/>
    <property type="match status" value="1"/>
</dbReference>
<dbReference type="Pfam" id="PF01668">
    <property type="entry name" value="SmpB"/>
    <property type="match status" value="1"/>
</dbReference>
<dbReference type="SUPFAM" id="SSF74982">
    <property type="entry name" value="Small protein B (SmpB)"/>
    <property type="match status" value="1"/>
</dbReference>
<dbReference type="PROSITE" id="PS01317">
    <property type="entry name" value="SSRP"/>
    <property type="match status" value="1"/>
</dbReference>
<proteinExistence type="inferred from homology"/>
<evidence type="ECO:0000255" key="1">
    <source>
        <dbReference type="HAMAP-Rule" id="MF_00023"/>
    </source>
</evidence>
<evidence type="ECO:0000256" key="2">
    <source>
        <dbReference type="SAM" id="MobiDB-lite"/>
    </source>
</evidence>
<protein>
    <recommendedName>
        <fullName evidence="1">SsrA-binding protein</fullName>
    </recommendedName>
    <alternativeName>
        <fullName evidence="1">Small protein B</fullName>
    </alternativeName>
</protein>
<name>SSRP_FUSNN</name>